<feature type="chain" id="PRO_0000413167" description="Sphinganine C4-monooxygenase 2">
    <location>
        <begin position="1"/>
        <end position="259"/>
    </location>
</feature>
<feature type="transmembrane region" description="Helical" evidence="2">
    <location>
        <begin position="10"/>
        <end position="30"/>
    </location>
</feature>
<feature type="transmembrane region" description="Helical" evidence="2">
    <location>
        <begin position="54"/>
        <end position="74"/>
    </location>
</feature>
<feature type="transmembrane region" description="Helical" evidence="2">
    <location>
        <begin position="91"/>
        <end position="111"/>
    </location>
</feature>
<feature type="domain" description="Fatty acid hydroxylase" evidence="2">
    <location>
        <begin position="98"/>
        <end position="234"/>
    </location>
</feature>
<feature type="short sequence motif" description="Histidine box-1">
    <location>
        <begin position="113"/>
        <end position="117"/>
    </location>
</feature>
<feature type="short sequence motif" description="Histidine box-2">
    <location>
        <begin position="127"/>
        <end position="131"/>
    </location>
</feature>
<feature type="short sequence motif" description="Histidine box-3">
    <location>
        <begin position="206"/>
        <end position="212"/>
    </location>
</feature>
<name>SBH2_ARATH</name>
<organism>
    <name type="scientific">Arabidopsis thaliana</name>
    <name type="common">Mouse-ear cress</name>
    <dbReference type="NCBI Taxonomy" id="3702"/>
    <lineage>
        <taxon>Eukaryota</taxon>
        <taxon>Viridiplantae</taxon>
        <taxon>Streptophyta</taxon>
        <taxon>Embryophyta</taxon>
        <taxon>Tracheophyta</taxon>
        <taxon>Spermatophyta</taxon>
        <taxon>Magnoliopsida</taxon>
        <taxon>eudicotyledons</taxon>
        <taxon>Gunneridae</taxon>
        <taxon>Pentapetalae</taxon>
        <taxon>rosids</taxon>
        <taxon>malvids</taxon>
        <taxon>Brassicales</taxon>
        <taxon>Brassicaceae</taxon>
        <taxon>Camelineae</taxon>
        <taxon>Arabidopsis</taxon>
    </lineage>
</organism>
<accession>Q9AST3</accession>
<accession>Q9M9T3</accession>
<dbReference type="EC" id="1.14.18.5" evidence="3"/>
<dbReference type="EMBL" id="AC012188">
    <property type="protein sequence ID" value="AAF43928.1"/>
    <property type="status" value="ALT_INIT"/>
    <property type="molecule type" value="Genomic_DNA"/>
</dbReference>
<dbReference type="EMBL" id="CP002684">
    <property type="protein sequence ID" value="AEE29139.1"/>
    <property type="molecule type" value="Genomic_DNA"/>
</dbReference>
<dbReference type="EMBL" id="AF361856">
    <property type="protein sequence ID" value="AAK32868.1"/>
    <property type="molecule type" value="mRNA"/>
</dbReference>
<dbReference type="EMBL" id="BT001128">
    <property type="protein sequence ID" value="AAN64519.1"/>
    <property type="molecule type" value="mRNA"/>
</dbReference>
<dbReference type="PIR" id="A86277">
    <property type="entry name" value="A86277"/>
</dbReference>
<dbReference type="RefSeq" id="NP_563944.1">
    <property type="nucleotide sequence ID" value="NM_101295.5"/>
</dbReference>
<dbReference type="SMR" id="Q9AST3"/>
<dbReference type="BioGRID" id="23230">
    <property type="interactions" value="1"/>
</dbReference>
<dbReference type="FunCoup" id="Q9AST3">
    <property type="interactions" value="35"/>
</dbReference>
<dbReference type="IntAct" id="Q9AST3">
    <property type="interactions" value="1"/>
</dbReference>
<dbReference type="STRING" id="3702.Q9AST3"/>
<dbReference type="PaxDb" id="3702-AT1G14290.1"/>
<dbReference type="ProteomicsDB" id="228131"/>
<dbReference type="EnsemblPlants" id="AT1G14290.1">
    <property type="protein sequence ID" value="AT1G14290.1"/>
    <property type="gene ID" value="AT1G14290"/>
</dbReference>
<dbReference type="GeneID" id="837990"/>
<dbReference type="Gramene" id="AT1G14290.1">
    <property type="protein sequence ID" value="AT1G14290.1"/>
    <property type="gene ID" value="AT1G14290"/>
</dbReference>
<dbReference type="KEGG" id="ath:AT1G14290"/>
<dbReference type="Araport" id="AT1G14290"/>
<dbReference type="TAIR" id="AT1G14290">
    <property type="gene designation" value="SBH2"/>
</dbReference>
<dbReference type="eggNOG" id="KOG0874">
    <property type="taxonomic scope" value="Eukaryota"/>
</dbReference>
<dbReference type="HOGENOM" id="CLU_043293_1_0_1"/>
<dbReference type="InParanoid" id="Q9AST3"/>
<dbReference type="OMA" id="ASTTQHF"/>
<dbReference type="OrthoDB" id="408954at2759"/>
<dbReference type="PhylomeDB" id="Q9AST3"/>
<dbReference type="BioCyc" id="ARA:AT1G14290-MONOMER"/>
<dbReference type="BioCyc" id="MetaCyc:AT1G14290-MONOMER"/>
<dbReference type="BRENDA" id="1.14.18.5">
    <property type="organism ID" value="399"/>
</dbReference>
<dbReference type="UniPathway" id="UPA00786"/>
<dbReference type="PRO" id="PR:Q9AST3"/>
<dbReference type="Proteomes" id="UP000006548">
    <property type="component" value="Chromosome 1"/>
</dbReference>
<dbReference type="ExpressionAtlas" id="Q9AST3">
    <property type="expression patterns" value="baseline and differential"/>
</dbReference>
<dbReference type="GO" id="GO:0005783">
    <property type="term" value="C:endoplasmic reticulum"/>
    <property type="evidence" value="ECO:0000314"/>
    <property type="project" value="TAIR"/>
</dbReference>
<dbReference type="GO" id="GO:0005789">
    <property type="term" value="C:endoplasmic reticulum membrane"/>
    <property type="evidence" value="ECO:0007669"/>
    <property type="project" value="UniProtKB-SubCell"/>
</dbReference>
<dbReference type="GO" id="GO:0005794">
    <property type="term" value="C:Golgi apparatus"/>
    <property type="evidence" value="ECO:0000314"/>
    <property type="project" value="TAIR"/>
</dbReference>
<dbReference type="GO" id="GO:0005506">
    <property type="term" value="F:iron ion binding"/>
    <property type="evidence" value="ECO:0007669"/>
    <property type="project" value="InterPro"/>
</dbReference>
<dbReference type="GO" id="GO:0102772">
    <property type="term" value="F:sphingolipid C4-monooxygenase activity"/>
    <property type="evidence" value="ECO:0007669"/>
    <property type="project" value="UniProtKB-EC"/>
</dbReference>
<dbReference type="GO" id="GO:0009640">
    <property type="term" value="P:photomorphogenesis"/>
    <property type="evidence" value="ECO:0000315"/>
    <property type="project" value="TAIR"/>
</dbReference>
<dbReference type="GO" id="GO:0046520">
    <property type="term" value="P:sphingoid biosynthetic process"/>
    <property type="evidence" value="ECO:0000315"/>
    <property type="project" value="TAIR"/>
</dbReference>
<dbReference type="InterPro" id="IPR006694">
    <property type="entry name" value="Fatty_acid_hydroxylase"/>
</dbReference>
<dbReference type="InterPro" id="IPR050307">
    <property type="entry name" value="Sterol_Desaturase_Related"/>
</dbReference>
<dbReference type="PANTHER" id="PTHR11863">
    <property type="entry name" value="STEROL DESATURASE"/>
    <property type="match status" value="1"/>
</dbReference>
<dbReference type="Pfam" id="PF04116">
    <property type="entry name" value="FA_hydroxylase"/>
    <property type="match status" value="1"/>
</dbReference>
<comment type="function">
    <text evidence="3 4">Involved in sphingolipid trihydroxy long-chain base (4-hydroxysphinganine) biosynthesis. Can use C18- and C20-sphinganine as substrates to produce C18- and C20-phytosphinganines (D-ribo-2-amino-1,3,4-trihydroxyoctadecane and -eicosane).</text>
</comment>
<comment type="catalytic activity">
    <reaction evidence="3">
        <text>a dihydroceramide + 2 Fe(II)-[cytochrome b5] + O2 + 2 H(+) = a phytoceramide + 2 Fe(III)-[cytochrome b5] + H2O</text>
        <dbReference type="Rhea" id="RHEA:55808"/>
        <dbReference type="Rhea" id="RHEA-COMP:10438"/>
        <dbReference type="Rhea" id="RHEA-COMP:10439"/>
        <dbReference type="ChEBI" id="CHEBI:15377"/>
        <dbReference type="ChEBI" id="CHEBI:15378"/>
        <dbReference type="ChEBI" id="CHEBI:15379"/>
        <dbReference type="ChEBI" id="CHEBI:29033"/>
        <dbReference type="ChEBI" id="CHEBI:29034"/>
        <dbReference type="ChEBI" id="CHEBI:139048"/>
        <dbReference type="ChEBI" id="CHEBI:139051"/>
        <dbReference type="EC" id="1.14.18.5"/>
    </reaction>
</comment>
<comment type="cofactor">
    <cofactor evidence="1">
        <name>Fe cation</name>
        <dbReference type="ChEBI" id="CHEBI:24875"/>
    </cofactor>
</comment>
<comment type="pathway">
    <text>Membrane lipid metabolism; sphingolipid biosynthesis.</text>
</comment>
<comment type="subcellular location">
    <subcellularLocation>
        <location evidence="4">Endoplasmic reticulum membrane</location>
        <topology evidence="4">Multi-pass membrane protein</topology>
    </subcellularLocation>
</comment>
<comment type="tissue specificity">
    <text evidence="4">Ubiquitous, with higher levels in flowers and roots.</text>
</comment>
<comment type="domain">
    <text>The histidine box domains may contain the active site and/or be involved in metal ion binding.</text>
</comment>
<comment type="disruption phenotype">
    <text evidence="4">No visible phenotype; due to the redundancy with SBH1. Sbh1 and sbh2 double mutants are severely dwarfed, do not progress from vegetative to reproductive growth and have enhanced expression of programmed cell death associated-genes.</text>
</comment>
<comment type="similarity">
    <text evidence="5">Belongs to the sterol desaturase family.</text>
</comment>
<comment type="sequence caution" evidence="5">
    <conflict type="erroneous initiation">
        <sequence resource="EMBL-CDS" id="AAF43928"/>
    </conflict>
    <text>Truncated N-terminus.</text>
</comment>
<sequence length="259" mass="29831">MMSFVISDEFLGTFVPILVYWVYSGMYICLGSLDKYRLHSKIDEDEKNLVSKSAVVKGVLLQQTLQAIISVILFKITGSDADAATTQQFSILLLARQFIIAMLVIDTWQYFIHRYMHLNKFLYKHIHSQHHRLIVPYSYGALYNHPLEGLLLDTIGGALSFLFSGMSPRTAIFFFSFATIKTVDDHCGLWLPGNPFHIFFSNNSAYHDVHHQLYGTKYNFSQPFFVMWDRILGTYLPYSLEKRANGGFETRPIKVSKDE</sequence>
<proteinExistence type="evidence at protein level"/>
<gene>
    <name type="primary">SBH2</name>
    <name type="ordered locus">At1g14290</name>
    <name type="ORF">F14L17.4</name>
    <name type="ORF">F14L17.5</name>
</gene>
<protein>
    <recommendedName>
        <fullName>Sphinganine C4-monooxygenase 2</fullName>
        <ecNumber evidence="3">1.14.18.5</ecNumber>
    </recommendedName>
    <alternativeName>
        <fullName>Sphingoid C4-hydroxylase 2</fullName>
    </alternativeName>
    <alternativeName>
        <fullName>Sphingoid base hydroxylase 2</fullName>
    </alternativeName>
</protein>
<keyword id="KW-0256">Endoplasmic reticulum</keyword>
<keyword id="KW-0444">Lipid biosynthesis</keyword>
<keyword id="KW-0443">Lipid metabolism</keyword>
<keyword id="KW-0472">Membrane</keyword>
<keyword id="KW-0560">Oxidoreductase</keyword>
<keyword id="KW-1185">Reference proteome</keyword>
<keyword id="KW-0812">Transmembrane</keyword>
<keyword id="KW-1133">Transmembrane helix</keyword>
<evidence type="ECO:0000250" key="1"/>
<evidence type="ECO:0000255" key="2"/>
<evidence type="ECO:0000269" key="3">
    <source>
    </source>
</evidence>
<evidence type="ECO:0000269" key="4">
    <source>
    </source>
</evidence>
<evidence type="ECO:0000305" key="5"/>
<reference key="1">
    <citation type="journal article" date="2001" name="FEBS Lett.">
        <title>Functional characterization of sphingolipid C4-hydroxylase genes from Arabidopsis thaliana.</title>
        <authorList>
            <person name="Sperling P."/>
            <person name="Ternes P."/>
            <person name="Moll H."/>
            <person name="Franke S."/>
            <person name="Zaehringer U."/>
            <person name="Heinz E."/>
        </authorList>
    </citation>
    <scope>NUCLEOTIDE SEQUENCE [MRNA]</scope>
    <scope>FUNCTION</scope>
    <scope>CATALYTIC ACTIVITY</scope>
</reference>
<reference key="2">
    <citation type="journal article" date="2000" name="Nature">
        <title>Sequence and analysis of chromosome 1 of the plant Arabidopsis thaliana.</title>
        <authorList>
            <person name="Theologis A."/>
            <person name="Ecker J.R."/>
            <person name="Palm C.J."/>
            <person name="Federspiel N.A."/>
            <person name="Kaul S."/>
            <person name="White O."/>
            <person name="Alonso J."/>
            <person name="Altafi H."/>
            <person name="Araujo R."/>
            <person name="Bowman C.L."/>
            <person name="Brooks S.Y."/>
            <person name="Buehler E."/>
            <person name="Chan A."/>
            <person name="Chao Q."/>
            <person name="Chen H."/>
            <person name="Cheuk R.F."/>
            <person name="Chin C.W."/>
            <person name="Chung M.K."/>
            <person name="Conn L."/>
            <person name="Conway A.B."/>
            <person name="Conway A.R."/>
            <person name="Creasy T.H."/>
            <person name="Dewar K."/>
            <person name="Dunn P."/>
            <person name="Etgu P."/>
            <person name="Feldblyum T.V."/>
            <person name="Feng J.-D."/>
            <person name="Fong B."/>
            <person name="Fujii C.Y."/>
            <person name="Gill J.E."/>
            <person name="Goldsmith A.D."/>
            <person name="Haas B."/>
            <person name="Hansen N.F."/>
            <person name="Hughes B."/>
            <person name="Huizar L."/>
            <person name="Hunter J.L."/>
            <person name="Jenkins J."/>
            <person name="Johnson-Hopson C."/>
            <person name="Khan S."/>
            <person name="Khaykin E."/>
            <person name="Kim C.J."/>
            <person name="Koo H.L."/>
            <person name="Kremenetskaia I."/>
            <person name="Kurtz D.B."/>
            <person name="Kwan A."/>
            <person name="Lam B."/>
            <person name="Langin-Hooper S."/>
            <person name="Lee A."/>
            <person name="Lee J.M."/>
            <person name="Lenz C.A."/>
            <person name="Li J.H."/>
            <person name="Li Y.-P."/>
            <person name="Lin X."/>
            <person name="Liu S.X."/>
            <person name="Liu Z.A."/>
            <person name="Luros J.S."/>
            <person name="Maiti R."/>
            <person name="Marziali A."/>
            <person name="Militscher J."/>
            <person name="Miranda M."/>
            <person name="Nguyen M."/>
            <person name="Nierman W.C."/>
            <person name="Osborne B.I."/>
            <person name="Pai G."/>
            <person name="Peterson J."/>
            <person name="Pham P.K."/>
            <person name="Rizzo M."/>
            <person name="Rooney T."/>
            <person name="Rowley D."/>
            <person name="Sakano H."/>
            <person name="Salzberg S.L."/>
            <person name="Schwartz J.R."/>
            <person name="Shinn P."/>
            <person name="Southwick A.M."/>
            <person name="Sun H."/>
            <person name="Tallon L.J."/>
            <person name="Tambunga G."/>
            <person name="Toriumi M.J."/>
            <person name="Town C.D."/>
            <person name="Utterback T."/>
            <person name="Van Aken S."/>
            <person name="Vaysberg M."/>
            <person name="Vysotskaia V.S."/>
            <person name="Walker M."/>
            <person name="Wu D."/>
            <person name="Yu G."/>
            <person name="Fraser C.M."/>
            <person name="Venter J.C."/>
            <person name="Davis R.W."/>
        </authorList>
    </citation>
    <scope>NUCLEOTIDE SEQUENCE [LARGE SCALE GENOMIC DNA]</scope>
    <source>
        <strain>cv. Columbia</strain>
    </source>
</reference>
<reference key="3">
    <citation type="journal article" date="2017" name="Plant J.">
        <title>Araport11: a complete reannotation of the Arabidopsis thaliana reference genome.</title>
        <authorList>
            <person name="Cheng C.Y."/>
            <person name="Krishnakumar V."/>
            <person name="Chan A.P."/>
            <person name="Thibaud-Nissen F."/>
            <person name="Schobel S."/>
            <person name="Town C.D."/>
        </authorList>
    </citation>
    <scope>GENOME REANNOTATION</scope>
    <source>
        <strain>cv. Columbia</strain>
    </source>
</reference>
<reference key="4">
    <citation type="journal article" date="2003" name="Science">
        <title>Empirical analysis of transcriptional activity in the Arabidopsis genome.</title>
        <authorList>
            <person name="Yamada K."/>
            <person name="Lim J."/>
            <person name="Dale J.M."/>
            <person name="Chen H."/>
            <person name="Shinn P."/>
            <person name="Palm C.J."/>
            <person name="Southwick A.M."/>
            <person name="Wu H.C."/>
            <person name="Kim C.J."/>
            <person name="Nguyen M."/>
            <person name="Pham P.K."/>
            <person name="Cheuk R.F."/>
            <person name="Karlin-Newmann G."/>
            <person name="Liu S.X."/>
            <person name="Lam B."/>
            <person name="Sakano H."/>
            <person name="Wu T."/>
            <person name="Yu G."/>
            <person name="Miranda M."/>
            <person name="Quach H.L."/>
            <person name="Tripp M."/>
            <person name="Chang C.H."/>
            <person name="Lee J.M."/>
            <person name="Toriumi M.J."/>
            <person name="Chan M.M."/>
            <person name="Tang C.C."/>
            <person name="Onodera C.S."/>
            <person name="Deng J.M."/>
            <person name="Akiyama K."/>
            <person name="Ansari Y."/>
            <person name="Arakawa T."/>
            <person name="Banh J."/>
            <person name="Banno F."/>
            <person name="Bowser L."/>
            <person name="Brooks S.Y."/>
            <person name="Carninci P."/>
            <person name="Chao Q."/>
            <person name="Choy N."/>
            <person name="Enju A."/>
            <person name="Goldsmith A.D."/>
            <person name="Gurjal M."/>
            <person name="Hansen N.F."/>
            <person name="Hayashizaki Y."/>
            <person name="Johnson-Hopson C."/>
            <person name="Hsuan V.W."/>
            <person name="Iida K."/>
            <person name="Karnes M."/>
            <person name="Khan S."/>
            <person name="Koesema E."/>
            <person name="Ishida J."/>
            <person name="Jiang P.X."/>
            <person name="Jones T."/>
            <person name="Kawai J."/>
            <person name="Kamiya A."/>
            <person name="Meyers C."/>
            <person name="Nakajima M."/>
            <person name="Narusaka M."/>
            <person name="Seki M."/>
            <person name="Sakurai T."/>
            <person name="Satou M."/>
            <person name="Tamse R."/>
            <person name="Vaysberg M."/>
            <person name="Wallender E.K."/>
            <person name="Wong C."/>
            <person name="Yamamura Y."/>
            <person name="Yuan S."/>
            <person name="Shinozaki K."/>
            <person name="Davis R.W."/>
            <person name="Theologis A."/>
            <person name="Ecker J.R."/>
        </authorList>
    </citation>
    <scope>NUCLEOTIDE SEQUENCE [LARGE SCALE MRNA]</scope>
    <source>
        <strain>cv. Columbia</strain>
    </source>
</reference>
<reference key="5">
    <citation type="journal article" date="2008" name="Plant Cell">
        <title>Sphingolipid long-chain base hydroxylation is important for growth and regulation of sphingolipid content and composition in Arabidopsis.</title>
        <authorList>
            <person name="Chen M."/>
            <person name="Markham J.E."/>
            <person name="Dietrich C.R."/>
            <person name="Jaworski J.G."/>
            <person name="Cahoon E.B."/>
        </authorList>
    </citation>
    <scope>FUNCTION</scope>
    <scope>TISSUE SPECIFICITY</scope>
    <scope>SUBCELLULAR LOCATION</scope>
    <scope>DISRUPTION PHENOTYPE</scope>
</reference>